<comment type="function">
    <text evidence="1">Endonuclease that is involved in the suppression of homologous recombination and thus may have a key role in the control of bacterial genetic diversity.</text>
</comment>
<comment type="function">
    <text evidence="1">Acts as a ribosome collision sensor, splitting the ribosome into its 2 subunits. Detects stalled/collided 70S ribosomes which it binds and splits by an ATP-hydrolysis driven conformational change. Acts upstream of the ribosome quality control system (RQC), a ribosome-associated complex that mediates the extraction of incompletely synthesized nascent chains from stalled ribosomes and their subsequent degradation. Probably generates substrates for RQC.</text>
</comment>
<comment type="subunit">
    <text evidence="1">Homodimer. Binds to stalled ribosomes, contacting rRNA.</text>
</comment>
<comment type="similarity">
    <text evidence="1">Belongs to the DNA mismatch repair MutS family. MutS2 subfamily.</text>
</comment>
<name>MUTS2_CALS8</name>
<dbReference type="EC" id="3.1.-.-" evidence="1"/>
<dbReference type="EC" id="3.6.4.-" evidence="1"/>
<dbReference type="EMBL" id="CP000679">
    <property type="protein sequence ID" value="ABP67297.1"/>
    <property type="molecule type" value="Genomic_DNA"/>
</dbReference>
<dbReference type="RefSeq" id="WP_011917231.1">
    <property type="nucleotide sequence ID" value="NC_009437.1"/>
</dbReference>
<dbReference type="SMR" id="A4XK62"/>
<dbReference type="STRING" id="351627.Csac_1710"/>
<dbReference type="KEGG" id="csc:Csac_1710"/>
<dbReference type="eggNOG" id="COG1193">
    <property type="taxonomic scope" value="Bacteria"/>
</dbReference>
<dbReference type="HOGENOM" id="CLU_011252_2_1_9"/>
<dbReference type="OrthoDB" id="9808166at2"/>
<dbReference type="Proteomes" id="UP000000256">
    <property type="component" value="Chromosome"/>
</dbReference>
<dbReference type="GO" id="GO:0005524">
    <property type="term" value="F:ATP binding"/>
    <property type="evidence" value="ECO:0007669"/>
    <property type="project" value="UniProtKB-UniRule"/>
</dbReference>
<dbReference type="GO" id="GO:0016887">
    <property type="term" value="F:ATP hydrolysis activity"/>
    <property type="evidence" value="ECO:0007669"/>
    <property type="project" value="InterPro"/>
</dbReference>
<dbReference type="GO" id="GO:0140664">
    <property type="term" value="F:ATP-dependent DNA damage sensor activity"/>
    <property type="evidence" value="ECO:0007669"/>
    <property type="project" value="InterPro"/>
</dbReference>
<dbReference type="GO" id="GO:0004519">
    <property type="term" value="F:endonuclease activity"/>
    <property type="evidence" value="ECO:0007669"/>
    <property type="project" value="UniProtKB-UniRule"/>
</dbReference>
<dbReference type="GO" id="GO:0030983">
    <property type="term" value="F:mismatched DNA binding"/>
    <property type="evidence" value="ECO:0007669"/>
    <property type="project" value="InterPro"/>
</dbReference>
<dbReference type="GO" id="GO:0043023">
    <property type="term" value="F:ribosomal large subunit binding"/>
    <property type="evidence" value="ECO:0007669"/>
    <property type="project" value="UniProtKB-UniRule"/>
</dbReference>
<dbReference type="GO" id="GO:0019843">
    <property type="term" value="F:rRNA binding"/>
    <property type="evidence" value="ECO:0007669"/>
    <property type="project" value="UniProtKB-UniRule"/>
</dbReference>
<dbReference type="GO" id="GO:0006298">
    <property type="term" value="P:mismatch repair"/>
    <property type="evidence" value="ECO:0007669"/>
    <property type="project" value="InterPro"/>
</dbReference>
<dbReference type="GO" id="GO:0045910">
    <property type="term" value="P:negative regulation of DNA recombination"/>
    <property type="evidence" value="ECO:0007669"/>
    <property type="project" value="InterPro"/>
</dbReference>
<dbReference type="GO" id="GO:0072344">
    <property type="term" value="P:rescue of stalled ribosome"/>
    <property type="evidence" value="ECO:0007669"/>
    <property type="project" value="UniProtKB-UniRule"/>
</dbReference>
<dbReference type="CDD" id="cd03280">
    <property type="entry name" value="ABC_MutS2"/>
    <property type="match status" value="1"/>
</dbReference>
<dbReference type="CDD" id="cd06503">
    <property type="entry name" value="ATP-synt_Fo_b"/>
    <property type="match status" value="1"/>
</dbReference>
<dbReference type="FunFam" id="3.40.50.300:FF:000830">
    <property type="entry name" value="Endonuclease MutS2"/>
    <property type="match status" value="1"/>
</dbReference>
<dbReference type="Gene3D" id="3.30.1370.110">
    <property type="match status" value="1"/>
</dbReference>
<dbReference type="Gene3D" id="3.40.50.300">
    <property type="entry name" value="P-loop containing nucleotide triphosphate hydrolases"/>
    <property type="match status" value="1"/>
</dbReference>
<dbReference type="HAMAP" id="MF_00092">
    <property type="entry name" value="MutS2"/>
    <property type="match status" value="1"/>
</dbReference>
<dbReference type="InterPro" id="IPR000432">
    <property type="entry name" value="DNA_mismatch_repair_MutS_C"/>
</dbReference>
<dbReference type="InterPro" id="IPR007696">
    <property type="entry name" value="DNA_mismatch_repair_MutS_core"/>
</dbReference>
<dbReference type="InterPro" id="IPR036187">
    <property type="entry name" value="DNA_mismatch_repair_MutS_sf"/>
</dbReference>
<dbReference type="InterPro" id="IPR046893">
    <property type="entry name" value="MSSS"/>
</dbReference>
<dbReference type="InterPro" id="IPR045076">
    <property type="entry name" value="MutS"/>
</dbReference>
<dbReference type="InterPro" id="IPR005747">
    <property type="entry name" value="MutS2"/>
</dbReference>
<dbReference type="InterPro" id="IPR027417">
    <property type="entry name" value="P-loop_NTPase"/>
</dbReference>
<dbReference type="InterPro" id="IPR002625">
    <property type="entry name" value="Smr_dom"/>
</dbReference>
<dbReference type="InterPro" id="IPR036063">
    <property type="entry name" value="Smr_dom_sf"/>
</dbReference>
<dbReference type="NCBIfam" id="TIGR01069">
    <property type="entry name" value="mutS2"/>
    <property type="match status" value="1"/>
</dbReference>
<dbReference type="PANTHER" id="PTHR48466:SF2">
    <property type="entry name" value="OS10G0509000 PROTEIN"/>
    <property type="match status" value="1"/>
</dbReference>
<dbReference type="PANTHER" id="PTHR48466">
    <property type="entry name" value="OS10G0509000 PROTEIN-RELATED"/>
    <property type="match status" value="1"/>
</dbReference>
<dbReference type="Pfam" id="PF20297">
    <property type="entry name" value="MSSS"/>
    <property type="match status" value="1"/>
</dbReference>
<dbReference type="Pfam" id="PF00488">
    <property type="entry name" value="MutS_V"/>
    <property type="match status" value="1"/>
</dbReference>
<dbReference type="Pfam" id="PF01713">
    <property type="entry name" value="Smr"/>
    <property type="match status" value="1"/>
</dbReference>
<dbReference type="PIRSF" id="PIRSF005814">
    <property type="entry name" value="MutS_YshD"/>
    <property type="match status" value="1"/>
</dbReference>
<dbReference type="SMART" id="SM00534">
    <property type="entry name" value="MUTSac"/>
    <property type="match status" value="1"/>
</dbReference>
<dbReference type="SMART" id="SM00533">
    <property type="entry name" value="MUTSd"/>
    <property type="match status" value="1"/>
</dbReference>
<dbReference type="SMART" id="SM00463">
    <property type="entry name" value="SMR"/>
    <property type="match status" value="1"/>
</dbReference>
<dbReference type="SUPFAM" id="SSF48334">
    <property type="entry name" value="DNA repair protein MutS, domain III"/>
    <property type="match status" value="1"/>
</dbReference>
<dbReference type="SUPFAM" id="SSF52540">
    <property type="entry name" value="P-loop containing nucleoside triphosphate hydrolases"/>
    <property type="match status" value="1"/>
</dbReference>
<dbReference type="SUPFAM" id="SSF160443">
    <property type="entry name" value="SMR domain-like"/>
    <property type="match status" value="1"/>
</dbReference>
<dbReference type="PROSITE" id="PS00486">
    <property type="entry name" value="DNA_MISMATCH_REPAIR_2"/>
    <property type="match status" value="1"/>
</dbReference>
<dbReference type="PROSITE" id="PS50828">
    <property type="entry name" value="SMR"/>
    <property type="match status" value="1"/>
</dbReference>
<accession>A4XK62</accession>
<reference key="1">
    <citation type="submission" date="2007-04" db="EMBL/GenBank/DDBJ databases">
        <title>Genome sequence of the thermophilic hydrogen-producing bacterium Caldicellulosiruptor saccharolyticus DSM 8903.</title>
        <authorList>
            <person name="Copeland A."/>
            <person name="Lucas S."/>
            <person name="Lapidus A."/>
            <person name="Barry K."/>
            <person name="Detter J.C."/>
            <person name="Glavina del Rio T."/>
            <person name="Hammon N."/>
            <person name="Israni S."/>
            <person name="Dalin E."/>
            <person name="Tice H."/>
            <person name="Pitluck S."/>
            <person name="Kiss H."/>
            <person name="Brettin T."/>
            <person name="Bruce D."/>
            <person name="Han C."/>
            <person name="Schmutz J."/>
            <person name="Larimer F."/>
            <person name="Land M."/>
            <person name="Hauser L."/>
            <person name="Kyrpides N."/>
            <person name="Lykidis A."/>
            <person name="van de Werken H.J.G."/>
            <person name="Verhaart M.R.A."/>
            <person name="VanFossen A.L."/>
            <person name="Lewis D.L."/>
            <person name="Nichols J.D."/>
            <person name="Goorissen H.P."/>
            <person name="van Niel E.W.J."/>
            <person name="Stams F.J.M."/>
            <person name="Willquist K.U."/>
            <person name="Ward D.E."/>
            <person name="van der Oost J."/>
            <person name="Kelly R.M."/>
            <person name="Kengen S.M.W."/>
            <person name="Richardson P."/>
        </authorList>
    </citation>
    <scope>NUCLEOTIDE SEQUENCE [LARGE SCALE GENOMIC DNA]</scope>
    <source>
        <strain>ATCC 43494 / DSM 8903 / Tp8T 6331</strain>
    </source>
</reference>
<evidence type="ECO:0000255" key="1">
    <source>
        <dbReference type="HAMAP-Rule" id="MF_00092"/>
    </source>
</evidence>
<proteinExistence type="inferred from homology"/>
<sequence length="787" mass="89592">MNQKTLKALEYDKIVEILKNMAKSTPAKEYFENLIPSTNLADIENELNKVDEGYRYVLKYGNPPTLEFENILPSLKKSKLGATLNPHEILQIGKVLKLSYEMRSYLSYTQDFSFLESMKKRLVNLKEVISRIDQTFLTADEILDTASPRLKEIRDRIRKLESRIRDELNSMIRDPKIQRFLQEPIITIRGEKLLLPVKAEFRNEVKGIVHDQSATGATLFVEPFVCVEISNQIRILKSQEKEEIERILQEISSLIASYCDEIETSFYALVELDIVFTKAIWAKEMNASKPVINTSGIINLKKARHPLIQKDKVVPIDIHLGKDFDVLIITGPNTGGKTVTLKTVGLFCLLCQSGIFIPADEDSQLCIFQKIFADIGDDQSIVQSLSTFSAHMKNIIEITKNADDKTLVLLDEIGAGTDPEEGAALAKAILKYLSEKGSKVIATTHYGELKIFAQQEDRFENASCEFDVKTLKPTYRLLIGIPGRSNALVISSNLGLDKGIVEMARGYLSQKTIDLDRIINEMEQKRKEAEENLELARKLKLEAQALKAAYEEEKKRFETERERIRKKAINEAKEIVERAQYEIENLFKDLRKLAENLKEKEVLKELEEKKREYERLIQSISQQEKQEAESKTKKTLQNIRLGQKVYVRSFDAVGFVESLPDSKGNLTVQIGIMKLNVNISDIEEVEEGEKKVYQTTSKNVKLREKSVDLSIDVRGKTSDDAILDVDKYLDDAYTSGLRQVTIIHGKGTGVLRQAIRNFLKRHPLVKSFRDGTYGEGEQGVTIVELRD</sequence>
<protein>
    <recommendedName>
        <fullName evidence="1">Endonuclease MutS2</fullName>
        <ecNumber evidence="1">3.1.-.-</ecNumber>
    </recommendedName>
    <alternativeName>
        <fullName evidence="1">Ribosome-associated protein quality control-upstream factor</fullName>
        <shortName evidence="1">RQC-upstream factor</shortName>
        <shortName evidence="1">RqcU</shortName>
        <ecNumber evidence="1">3.6.4.-</ecNumber>
    </alternativeName>
</protein>
<gene>
    <name evidence="1" type="primary">mutS2</name>
    <name evidence="1" type="synonym">rqcU</name>
    <name type="ordered locus">Csac_1710</name>
</gene>
<organism>
    <name type="scientific">Caldicellulosiruptor saccharolyticus (strain ATCC 43494 / DSM 8903 / Tp8T 6331)</name>
    <dbReference type="NCBI Taxonomy" id="351627"/>
    <lineage>
        <taxon>Bacteria</taxon>
        <taxon>Bacillati</taxon>
        <taxon>Bacillota</taxon>
        <taxon>Bacillota incertae sedis</taxon>
        <taxon>Caldicellulosiruptorales</taxon>
        <taxon>Caldicellulosiruptoraceae</taxon>
        <taxon>Caldicellulosiruptor</taxon>
    </lineage>
</organism>
<keyword id="KW-0067">ATP-binding</keyword>
<keyword id="KW-0238">DNA-binding</keyword>
<keyword id="KW-0255">Endonuclease</keyword>
<keyword id="KW-0378">Hydrolase</keyword>
<keyword id="KW-0540">Nuclease</keyword>
<keyword id="KW-0547">Nucleotide-binding</keyword>
<keyword id="KW-0694">RNA-binding</keyword>
<keyword id="KW-0699">rRNA-binding</keyword>
<feature type="chain" id="PRO_1000093342" description="Endonuclease MutS2">
    <location>
        <begin position="1"/>
        <end position="787"/>
    </location>
</feature>
<feature type="domain" description="Smr" evidence="1">
    <location>
        <begin position="711"/>
        <end position="786"/>
    </location>
</feature>
<feature type="binding site" evidence="1">
    <location>
        <begin position="331"/>
        <end position="338"/>
    </location>
    <ligand>
        <name>ATP</name>
        <dbReference type="ChEBI" id="CHEBI:30616"/>
    </ligand>
</feature>